<proteinExistence type="inferred from homology"/>
<sequence length="156" mass="17485">MKIQLIAVGTKMPKWVEEGYKEYSRRFPKDMPLELVEITAGKRGKNADITRILQKEGEAMLAAVPKGNRIVTLDIPGKRWDTEQLAEQLEAWKLDARDVSILIGGPEGLAPACKAAADQSWSLSPLTLPHPLVRVVMAESLYRAWSITANHPYHRE</sequence>
<gene>
    <name evidence="1" type="primary">rlmH</name>
    <name type="ordered locus">VFMJ11_0768</name>
</gene>
<organism>
    <name type="scientific">Aliivibrio fischeri (strain MJ11)</name>
    <name type="common">Vibrio fischeri</name>
    <dbReference type="NCBI Taxonomy" id="388396"/>
    <lineage>
        <taxon>Bacteria</taxon>
        <taxon>Pseudomonadati</taxon>
        <taxon>Pseudomonadota</taxon>
        <taxon>Gammaproteobacteria</taxon>
        <taxon>Vibrionales</taxon>
        <taxon>Vibrionaceae</taxon>
        <taxon>Aliivibrio</taxon>
    </lineage>
</organism>
<dbReference type="EC" id="2.1.1.177" evidence="1"/>
<dbReference type="EMBL" id="CP001139">
    <property type="protein sequence ID" value="ACH65559.1"/>
    <property type="molecule type" value="Genomic_DNA"/>
</dbReference>
<dbReference type="RefSeq" id="WP_012533137.1">
    <property type="nucleotide sequence ID" value="NC_011184.1"/>
</dbReference>
<dbReference type="SMR" id="B5FBK3"/>
<dbReference type="KEGG" id="vfm:VFMJ11_0768"/>
<dbReference type="HOGENOM" id="CLU_100552_1_0_6"/>
<dbReference type="Proteomes" id="UP000001857">
    <property type="component" value="Chromosome I"/>
</dbReference>
<dbReference type="GO" id="GO:0005737">
    <property type="term" value="C:cytoplasm"/>
    <property type="evidence" value="ECO:0007669"/>
    <property type="project" value="UniProtKB-SubCell"/>
</dbReference>
<dbReference type="GO" id="GO:0070038">
    <property type="term" value="F:rRNA (pseudouridine-N3-)-methyltransferase activity"/>
    <property type="evidence" value="ECO:0007669"/>
    <property type="project" value="UniProtKB-UniRule"/>
</dbReference>
<dbReference type="CDD" id="cd18081">
    <property type="entry name" value="RlmH-like"/>
    <property type="match status" value="1"/>
</dbReference>
<dbReference type="Gene3D" id="3.40.1280.10">
    <property type="match status" value="1"/>
</dbReference>
<dbReference type="HAMAP" id="MF_00658">
    <property type="entry name" value="23SrRNA_methyltr_H"/>
    <property type="match status" value="1"/>
</dbReference>
<dbReference type="InterPro" id="IPR029028">
    <property type="entry name" value="Alpha/beta_knot_MTases"/>
</dbReference>
<dbReference type="InterPro" id="IPR003742">
    <property type="entry name" value="RlmH-like"/>
</dbReference>
<dbReference type="InterPro" id="IPR029026">
    <property type="entry name" value="tRNA_m1G_MTases_N"/>
</dbReference>
<dbReference type="NCBIfam" id="NF000984">
    <property type="entry name" value="PRK00103.1-1"/>
    <property type="match status" value="1"/>
</dbReference>
<dbReference type="NCBIfam" id="NF000986">
    <property type="entry name" value="PRK00103.1-4"/>
    <property type="match status" value="1"/>
</dbReference>
<dbReference type="NCBIfam" id="TIGR00246">
    <property type="entry name" value="tRNA_RlmH_YbeA"/>
    <property type="match status" value="1"/>
</dbReference>
<dbReference type="PANTHER" id="PTHR33603">
    <property type="entry name" value="METHYLTRANSFERASE"/>
    <property type="match status" value="1"/>
</dbReference>
<dbReference type="PANTHER" id="PTHR33603:SF1">
    <property type="entry name" value="RIBOSOMAL RNA LARGE SUBUNIT METHYLTRANSFERASE H"/>
    <property type="match status" value="1"/>
</dbReference>
<dbReference type="Pfam" id="PF02590">
    <property type="entry name" value="SPOUT_MTase"/>
    <property type="match status" value="1"/>
</dbReference>
<dbReference type="PIRSF" id="PIRSF004505">
    <property type="entry name" value="MT_bac"/>
    <property type="match status" value="1"/>
</dbReference>
<dbReference type="SUPFAM" id="SSF75217">
    <property type="entry name" value="alpha/beta knot"/>
    <property type="match status" value="1"/>
</dbReference>
<evidence type="ECO:0000255" key="1">
    <source>
        <dbReference type="HAMAP-Rule" id="MF_00658"/>
    </source>
</evidence>
<feature type="chain" id="PRO_0000366674" description="Ribosomal RNA large subunit methyltransferase H">
    <location>
        <begin position="1"/>
        <end position="156"/>
    </location>
</feature>
<feature type="binding site" evidence="1">
    <location>
        <position position="73"/>
    </location>
    <ligand>
        <name>S-adenosyl-L-methionine</name>
        <dbReference type="ChEBI" id="CHEBI:59789"/>
    </ligand>
</feature>
<feature type="binding site" evidence="1">
    <location>
        <position position="104"/>
    </location>
    <ligand>
        <name>S-adenosyl-L-methionine</name>
        <dbReference type="ChEBI" id="CHEBI:59789"/>
    </ligand>
</feature>
<feature type="binding site" evidence="1">
    <location>
        <begin position="123"/>
        <end position="128"/>
    </location>
    <ligand>
        <name>S-adenosyl-L-methionine</name>
        <dbReference type="ChEBI" id="CHEBI:59789"/>
    </ligand>
</feature>
<keyword id="KW-0963">Cytoplasm</keyword>
<keyword id="KW-0489">Methyltransferase</keyword>
<keyword id="KW-0698">rRNA processing</keyword>
<keyword id="KW-0949">S-adenosyl-L-methionine</keyword>
<keyword id="KW-0808">Transferase</keyword>
<name>RLMH_ALIFM</name>
<accession>B5FBK3</accession>
<comment type="function">
    <text evidence="1">Specifically methylates the pseudouridine at position 1915 (m3Psi1915) in 23S rRNA.</text>
</comment>
<comment type="catalytic activity">
    <reaction evidence="1">
        <text>pseudouridine(1915) in 23S rRNA + S-adenosyl-L-methionine = N(3)-methylpseudouridine(1915) in 23S rRNA + S-adenosyl-L-homocysteine + H(+)</text>
        <dbReference type="Rhea" id="RHEA:42752"/>
        <dbReference type="Rhea" id="RHEA-COMP:10221"/>
        <dbReference type="Rhea" id="RHEA-COMP:10222"/>
        <dbReference type="ChEBI" id="CHEBI:15378"/>
        <dbReference type="ChEBI" id="CHEBI:57856"/>
        <dbReference type="ChEBI" id="CHEBI:59789"/>
        <dbReference type="ChEBI" id="CHEBI:65314"/>
        <dbReference type="ChEBI" id="CHEBI:74486"/>
        <dbReference type="EC" id="2.1.1.177"/>
    </reaction>
</comment>
<comment type="subunit">
    <text evidence="1">Homodimer.</text>
</comment>
<comment type="subcellular location">
    <subcellularLocation>
        <location evidence="1">Cytoplasm</location>
    </subcellularLocation>
</comment>
<comment type="similarity">
    <text evidence="1">Belongs to the RNA methyltransferase RlmH family.</text>
</comment>
<reference key="1">
    <citation type="submission" date="2008-08" db="EMBL/GenBank/DDBJ databases">
        <title>Complete sequence of Vibrio fischeri strain MJ11.</title>
        <authorList>
            <person name="Mandel M.J."/>
            <person name="Stabb E.V."/>
            <person name="Ruby E.G."/>
            <person name="Ferriera S."/>
            <person name="Johnson J."/>
            <person name="Kravitz S."/>
            <person name="Beeson K."/>
            <person name="Sutton G."/>
            <person name="Rogers Y.-H."/>
            <person name="Friedman R."/>
            <person name="Frazier M."/>
            <person name="Venter J.C."/>
        </authorList>
    </citation>
    <scope>NUCLEOTIDE SEQUENCE [LARGE SCALE GENOMIC DNA]</scope>
    <source>
        <strain>MJ11</strain>
    </source>
</reference>
<protein>
    <recommendedName>
        <fullName evidence="1">Ribosomal RNA large subunit methyltransferase H</fullName>
        <ecNumber evidence="1">2.1.1.177</ecNumber>
    </recommendedName>
    <alternativeName>
        <fullName evidence="1">23S rRNA (pseudouridine1915-N3)-methyltransferase</fullName>
    </alternativeName>
    <alternativeName>
        <fullName evidence="1">23S rRNA m3Psi1915 methyltransferase</fullName>
    </alternativeName>
    <alternativeName>
        <fullName evidence="1">rRNA (pseudouridine-N3-)-methyltransferase RlmH</fullName>
    </alternativeName>
</protein>